<dbReference type="EMBL" id="BC082629">
    <property type="protein sequence ID" value="AAH82629.1"/>
    <property type="molecule type" value="mRNA"/>
</dbReference>
<dbReference type="RefSeq" id="XP_018112333.1">
    <property type="nucleotide sequence ID" value="XM_018256844.1"/>
</dbReference>
<dbReference type="SMR" id="Q640J6"/>
<dbReference type="BioGRID" id="104737">
    <property type="interactions" value="1"/>
</dbReference>
<dbReference type="IntAct" id="Q640J6">
    <property type="interactions" value="1"/>
</dbReference>
<dbReference type="DNASU" id="494657"/>
<dbReference type="GeneID" id="494657"/>
<dbReference type="KEGG" id="xla:494657"/>
<dbReference type="AGR" id="Xenbase:XB-GENE-6255612"/>
<dbReference type="CTD" id="494657"/>
<dbReference type="Xenbase" id="XB-GENE-6255612">
    <property type="gene designation" value="wdr82.L"/>
</dbReference>
<dbReference type="OMA" id="KICVLNG"/>
<dbReference type="OrthoDB" id="27537at2759"/>
<dbReference type="Proteomes" id="UP000186698">
    <property type="component" value="Chromosome 4L"/>
</dbReference>
<dbReference type="Bgee" id="494657">
    <property type="expression patterns" value="Expressed in egg cell and 19 other cell types or tissues"/>
</dbReference>
<dbReference type="GO" id="GO:0005694">
    <property type="term" value="C:chromosome"/>
    <property type="evidence" value="ECO:0007669"/>
    <property type="project" value="UniProtKB-SubCell"/>
</dbReference>
<dbReference type="GO" id="GO:0072357">
    <property type="term" value="C:PTW/PP1 phosphatase complex"/>
    <property type="evidence" value="ECO:0000250"/>
    <property type="project" value="UniProtKB"/>
</dbReference>
<dbReference type="GO" id="GO:0048188">
    <property type="term" value="C:Set1C/COMPASS complex"/>
    <property type="evidence" value="ECO:0000318"/>
    <property type="project" value="GO_Central"/>
</dbReference>
<dbReference type="GO" id="GO:0003682">
    <property type="term" value="F:chromatin binding"/>
    <property type="evidence" value="ECO:0000318"/>
    <property type="project" value="GO_Central"/>
</dbReference>
<dbReference type="GO" id="GO:0006353">
    <property type="term" value="P:DNA-templated transcription termination"/>
    <property type="evidence" value="ECO:0007669"/>
    <property type="project" value="UniProtKB-KW"/>
</dbReference>
<dbReference type="GO" id="GO:0110064">
    <property type="term" value="P:lncRNA catabolic process"/>
    <property type="evidence" value="ECO:0000250"/>
    <property type="project" value="UniProtKB"/>
</dbReference>
<dbReference type="GO" id="GO:0032785">
    <property type="term" value="P:negative regulation of DNA-templated transcription, elongation"/>
    <property type="evidence" value="ECO:0000250"/>
    <property type="project" value="UniProtKB"/>
</dbReference>
<dbReference type="GO" id="GO:0140744">
    <property type="term" value="P:negative regulation of lncRNA transcription"/>
    <property type="evidence" value="ECO:0000250"/>
    <property type="project" value="UniProtKB"/>
</dbReference>
<dbReference type="GO" id="GO:0071027">
    <property type="term" value="P:nuclear RNA surveillance"/>
    <property type="evidence" value="ECO:0000250"/>
    <property type="project" value="UniProtKB"/>
</dbReference>
<dbReference type="GO" id="GO:0032968">
    <property type="term" value="P:positive regulation of transcription elongation by RNA polymerase II"/>
    <property type="evidence" value="ECO:0000250"/>
    <property type="project" value="UniProtKB"/>
</dbReference>
<dbReference type="GO" id="GO:0001111">
    <property type="term" value="P:RNA polymerase II promoter clearance"/>
    <property type="evidence" value="ECO:0000250"/>
    <property type="project" value="UniProtKB"/>
</dbReference>
<dbReference type="CDD" id="cd00200">
    <property type="entry name" value="WD40"/>
    <property type="match status" value="1"/>
</dbReference>
<dbReference type="FunFam" id="2.130.10.10:FF:000065">
    <property type="entry name" value="WD repeat-containing protein 82"/>
    <property type="match status" value="1"/>
</dbReference>
<dbReference type="Gene3D" id="2.130.10.10">
    <property type="entry name" value="YVTN repeat-like/Quinoprotein amine dehydrogenase"/>
    <property type="match status" value="1"/>
</dbReference>
<dbReference type="InterPro" id="IPR020472">
    <property type="entry name" value="G-protein_beta_WD-40_rep"/>
</dbReference>
<dbReference type="InterPro" id="IPR037867">
    <property type="entry name" value="Swd2/WDR82"/>
</dbReference>
<dbReference type="InterPro" id="IPR015943">
    <property type="entry name" value="WD40/YVTN_repeat-like_dom_sf"/>
</dbReference>
<dbReference type="InterPro" id="IPR036322">
    <property type="entry name" value="WD40_repeat_dom_sf"/>
</dbReference>
<dbReference type="InterPro" id="IPR001680">
    <property type="entry name" value="WD40_rpt"/>
</dbReference>
<dbReference type="PANTHER" id="PTHR19861:SF0">
    <property type="entry name" value="WD REPEAT-CONTAINING PROTEIN 82"/>
    <property type="match status" value="1"/>
</dbReference>
<dbReference type="PANTHER" id="PTHR19861">
    <property type="entry name" value="WD40 REPEAT PROTEIN SWD2"/>
    <property type="match status" value="1"/>
</dbReference>
<dbReference type="Pfam" id="PF00400">
    <property type="entry name" value="WD40"/>
    <property type="match status" value="3"/>
</dbReference>
<dbReference type="PRINTS" id="PR00320">
    <property type="entry name" value="GPROTEINBRPT"/>
</dbReference>
<dbReference type="SMART" id="SM00320">
    <property type="entry name" value="WD40"/>
    <property type="match status" value="6"/>
</dbReference>
<dbReference type="SUPFAM" id="SSF50978">
    <property type="entry name" value="WD40 repeat-like"/>
    <property type="match status" value="1"/>
</dbReference>
<dbReference type="PROSITE" id="PS00678">
    <property type="entry name" value="WD_REPEATS_1"/>
    <property type="match status" value="1"/>
</dbReference>
<dbReference type="PROSITE" id="PS50082">
    <property type="entry name" value="WD_REPEATS_2"/>
    <property type="match status" value="3"/>
</dbReference>
<dbReference type="PROSITE" id="PS50294">
    <property type="entry name" value="WD_REPEATS_REGION"/>
    <property type="match status" value="1"/>
</dbReference>
<proteinExistence type="evidence at transcript level"/>
<protein>
    <recommendedName>
        <fullName evidence="3">WD repeat-containing protein 82-A</fullName>
    </recommendedName>
</protein>
<sequence>MKLTDGVLRSFRVAKVFRENSDKINCFDFSPTGETVISSSDDDSIVLYDCQEGKPKRTLYSKKYGVDLIRYTHAANTVVYSSNKIDDTIRYLSLHDNKYIRYFPGHSKRVVALSMSPVDDTFISASLDKTIRLWDLRSPNCQGLMHLQGKPVCSFDPEGLIFAAGVNSEMVKLYDLRSFDKGPFATFKMQYDRTCEWTSLKFSQDGKLILMSTNGGFLRLVDAFKGAVMHTFGGYNNSKAVTLEASFTPDSQFIMIGSEDGKIHVWNCESGMKVAVLDGKHTGPITCLQFNPKFMTFASACSNMAFWLPTIDD</sequence>
<keyword id="KW-0158">Chromosome</keyword>
<keyword id="KW-0963">Cytoplasm</keyword>
<keyword id="KW-0539">Nucleus</keyword>
<keyword id="KW-1185">Reference proteome</keyword>
<keyword id="KW-0677">Repeat</keyword>
<keyword id="KW-0804">Transcription</keyword>
<keyword id="KW-0805">Transcription regulation</keyword>
<keyword id="KW-0806">Transcription termination</keyword>
<keyword id="KW-0853">WD repeat</keyword>
<gene>
    <name type="primary">wdr82-a</name>
</gene>
<reference key="1">
    <citation type="submission" date="2004-09" db="EMBL/GenBank/DDBJ databases">
        <authorList>
            <consortium name="NIH - Xenopus Gene Collection (XGC) project"/>
        </authorList>
    </citation>
    <scope>NUCLEOTIDE SEQUENCE [LARGE SCALE MRNA]</scope>
    <source>
        <tissue>Embryo</tissue>
    </source>
</reference>
<evidence type="ECO:0000250" key="1">
    <source>
        <dbReference type="UniProtKB" id="Q6UXN9"/>
    </source>
</evidence>
<evidence type="ECO:0000250" key="2">
    <source>
        <dbReference type="UniProtKB" id="Q8BFQ4"/>
    </source>
</evidence>
<evidence type="ECO:0000305" key="3"/>
<accession>Q640J6</accession>
<name>WD82A_XENLA</name>
<feature type="chain" id="PRO_0000279689" description="WD repeat-containing protein 82-A">
    <location>
        <begin position="1"/>
        <end position="313"/>
    </location>
</feature>
<feature type="repeat" description="WD 1">
    <location>
        <begin position="19"/>
        <end position="58"/>
    </location>
</feature>
<feature type="repeat" description="WD 2">
    <location>
        <begin position="105"/>
        <end position="144"/>
    </location>
</feature>
<feature type="repeat" description="WD 3">
    <location>
        <begin position="146"/>
        <end position="184"/>
    </location>
</feature>
<feature type="repeat" description="WD 4">
    <location>
        <begin position="192"/>
        <end position="231"/>
    </location>
</feature>
<feature type="repeat" description="WD 5">
    <location>
        <begin position="236"/>
        <end position="276"/>
    </location>
</feature>
<feature type="repeat" description="WD 6">
    <location>
        <begin position="280"/>
        <end position="313"/>
    </location>
</feature>
<organism>
    <name type="scientific">Xenopus laevis</name>
    <name type="common">African clawed frog</name>
    <dbReference type="NCBI Taxonomy" id="8355"/>
    <lineage>
        <taxon>Eukaryota</taxon>
        <taxon>Metazoa</taxon>
        <taxon>Chordata</taxon>
        <taxon>Craniata</taxon>
        <taxon>Vertebrata</taxon>
        <taxon>Euteleostomi</taxon>
        <taxon>Amphibia</taxon>
        <taxon>Batrachia</taxon>
        <taxon>Anura</taxon>
        <taxon>Pipoidea</taxon>
        <taxon>Pipidae</taxon>
        <taxon>Xenopodinae</taxon>
        <taxon>Xenopus</taxon>
        <taxon>Xenopus</taxon>
    </lineage>
</organism>
<comment type="function">
    <text evidence="1">Regulatory component of the SET1/COMPASS complex implicated in the tethering of this complex to transcriptional start sites of active genes. Facilitates histone H3 'Lys-4' methylation (H3K4me) via recruitment of the SETD1A or SETD1B to the 'Ser-5' phosphorylated C-terminal domain (CTD) of RNA polymerase II large subunit (POLR2A). Component of the PNUTS-PP1 protein phosphatase complex, a protein phosphatase 1 (PP1) complex that promotes RNA polymerase II transcription pause-release, allowing transcription elongation.</text>
</comment>
<comment type="subunit">
    <text evidence="1">Component of the SET1/COMPASS complex. Component of the PNUTS-PP1 phosphatase complex.</text>
</comment>
<comment type="subcellular location">
    <subcellularLocation>
        <location evidence="1">Nucleus</location>
    </subcellularLocation>
    <subcellularLocation>
        <location evidence="2">Chromosome</location>
    </subcellularLocation>
    <subcellularLocation>
        <location evidence="2">Cytoplasm</location>
    </subcellularLocation>
    <text evidence="2">Recruited at sites of high RNA polymerase II occupancy (By similarity).</text>
</comment>
<comment type="similarity">
    <text evidence="3">Belongs to the WD repeat SWD2 family.</text>
</comment>